<sequence length="363" mass="40937">MIHQKMIGKTRRLDFTTLFFLITLSLIVNSFIFNNLLIICIFLVFFSICILITNYGLKIIKQLNLLQNIRDTGPSFHFNKKNTPTMGGIFIILPLLLLLLIVNHYFYSMGIILLFFGSLSFFIIGFLDDYLSIKKKKNIGLRSTQKFILQSLISILFIVLAYQNGYINSLITVSNNWAIDTNIVIFPICFVTLVGLSNAVNLTDGLDGLASGCGSIVFYGLGTEIFIKGQQELIIYGLIAYAMSGLCVGFLKFNKYPAKIFMGDTGSLTIGATLGYISILTNSYFTLFIISGIFVIEALSVIIQVSFFKITKKIFKRGKRVFLMTPIHHHFELSGMKEEKIVENFWKINILLVILGIVLKINL</sequence>
<organism>
    <name type="scientific">Prochlorococcus marinus (strain MIT 9515)</name>
    <dbReference type="NCBI Taxonomy" id="167542"/>
    <lineage>
        <taxon>Bacteria</taxon>
        <taxon>Bacillati</taxon>
        <taxon>Cyanobacteriota</taxon>
        <taxon>Cyanophyceae</taxon>
        <taxon>Synechococcales</taxon>
        <taxon>Prochlorococcaceae</taxon>
        <taxon>Prochlorococcus</taxon>
    </lineage>
</organism>
<evidence type="ECO:0000255" key="1">
    <source>
        <dbReference type="HAMAP-Rule" id="MF_00038"/>
    </source>
</evidence>
<accession>A2BZ97</accession>
<proteinExistence type="inferred from homology"/>
<dbReference type="EC" id="2.7.8.13" evidence="1"/>
<dbReference type="EMBL" id="CP000552">
    <property type="protein sequence ID" value="ABM73108.1"/>
    <property type="molecule type" value="Genomic_DNA"/>
</dbReference>
<dbReference type="SMR" id="A2BZ97"/>
<dbReference type="STRING" id="167542.P9515_19011"/>
<dbReference type="KEGG" id="pmc:P9515_19011"/>
<dbReference type="eggNOG" id="COG0472">
    <property type="taxonomic scope" value="Bacteria"/>
</dbReference>
<dbReference type="HOGENOM" id="CLU_023982_0_2_3"/>
<dbReference type="UniPathway" id="UPA00219"/>
<dbReference type="Proteomes" id="UP000001589">
    <property type="component" value="Chromosome"/>
</dbReference>
<dbReference type="GO" id="GO:0005886">
    <property type="term" value="C:plasma membrane"/>
    <property type="evidence" value="ECO:0007669"/>
    <property type="project" value="UniProtKB-SubCell"/>
</dbReference>
<dbReference type="GO" id="GO:0046872">
    <property type="term" value="F:metal ion binding"/>
    <property type="evidence" value="ECO:0007669"/>
    <property type="project" value="UniProtKB-KW"/>
</dbReference>
<dbReference type="GO" id="GO:0008963">
    <property type="term" value="F:phospho-N-acetylmuramoyl-pentapeptide-transferase activity"/>
    <property type="evidence" value="ECO:0007669"/>
    <property type="project" value="UniProtKB-UniRule"/>
</dbReference>
<dbReference type="GO" id="GO:0051992">
    <property type="term" value="F:UDP-N-acetylmuramoyl-L-alanyl-D-glutamyl-meso-2,6-diaminopimelyl-D-alanyl-D-alanine:undecaprenyl-phosphate transferase activity"/>
    <property type="evidence" value="ECO:0007669"/>
    <property type="project" value="RHEA"/>
</dbReference>
<dbReference type="GO" id="GO:0051301">
    <property type="term" value="P:cell division"/>
    <property type="evidence" value="ECO:0007669"/>
    <property type="project" value="UniProtKB-KW"/>
</dbReference>
<dbReference type="GO" id="GO:0071555">
    <property type="term" value="P:cell wall organization"/>
    <property type="evidence" value="ECO:0007669"/>
    <property type="project" value="UniProtKB-KW"/>
</dbReference>
<dbReference type="GO" id="GO:0009252">
    <property type="term" value="P:peptidoglycan biosynthetic process"/>
    <property type="evidence" value="ECO:0007669"/>
    <property type="project" value="UniProtKB-UniRule"/>
</dbReference>
<dbReference type="GO" id="GO:0008360">
    <property type="term" value="P:regulation of cell shape"/>
    <property type="evidence" value="ECO:0007669"/>
    <property type="project" value="UniProtKB-KW"/>
</dbReference>
<dbReference type="CDD" id="cd06852">
    <property type="entry name" value="GT_MraY"/>
    <property type="match status" value="1"/>
</dbReference>
<dbReference type="HAMAP" id="MF_00038">
    <property type="entry name" value="MraY"/>
    <property type="match status" value="1"/>
</dbReference>
<dbReference type="InterPro" id="IPR000715">
    <property type="entry name" value="Glycosyl_transferase_4"/>
</dbReference>
<dbReference type="InterPro" id="IPR003524">
    <property type="entry name" value="PNAcMuramoyl-5peptid_Trfase"/>
</dbReference>
<dbReference type="InterPro" id="IPR018480">
    <property type="entry name" value="PNAcMuramoyl-5peptid_Trfase_CS"/>
</dbReference>
<dbReference type="NCBIfam" id="TIGR00445">
    <property type="entry name" value="mraY"/>
    <property type="match status" value="1"/>
</dbReference>
<dbReference type="PANTHER" id="PTHR22926">
    <property type="entry name" value="PHOSPHO-N-ACETYLMURAMOYL-PENTAPEPTIDE-TRANSFERASE"/>
    <property type="match status" value="1"/>
</dbReference>
<dbReference type="PANTHER" id="PTHR22926:SF5">
    <property type="entry name" value="PHOSPHO-N-ACETYLMURAMOYL-PENTAPEPTIDE-TRANSFERASE HOMOLOG"/>
    <property type="match status" value="1"/>
</dbReference>
<dbReference type="Pfam" id="PF00953">
    <property type="entry name" value="Glycos_transf_4"/>
    <property type="match status" value="1"/>
</dbReference>
<dbReference type="Pfam" id="PF10555">
    <property type="entry name" value="MraY_sig1"/>
    <property type="match status" value="1"/>
</dbReference>
<dbReference type="PROSITE" id="PS01347">
    <property type="entry name" value="MRAY_1"/>
    <property type="match status" value="1"/>
</dbReference>
<dbReference type="PROSITE" id="PS01348">
    <property type="entry name" value="MRAY_2"/>
    <property type="match status" value="1"/>
</dbReference>
<name>MRAY_PROM5</name>
<comment type="function">
    <text evidence="1">Catalyzes the initial step of the lipid cycle reactions in the biosynthesis of the cell wall peptidoglycan: transfers peptidoglycan precursor phospho-MurNAc-pentapeptide from UDP-MurNAc-pentapeptide onto the lipid carrier undecaprenyl phosphate, yielding undecaprenyl-pyrophosphoryl-MurNAc-pentapeptide, known as lipid I.</text>
</comment>
<comment type="catalytic activity">
    <reaction evidence="1">
        <text>UDP-N-acetyl-alpha-D-muramoyl-L-alanyl-gamma-D-glutamyl-meso-2,6-diaminopimeloyl-D-alanyl-D-alanine + di-trans,octa-cis-undecaprenyl phosphate = di-trans,octa-cis-undecaprenyl diphospho-N-acetyl-alpha-D-muramoyl-L-alanyl-D-glutamyl-meso-2,6-diaminopimeloyl-D-alanyl-D-alanine + UMP</text>
        <dbReference type="Rhea" id="RHEA:28386"/>
        <dbReference type="ChEBI" id="CHEBI:57865"/>
        <dbReference type="ChEBI" id="CHEBI:60392"/>
        <dbReference type="ChEBI" id="CHEBI:61386"/>
        <dbReference type="ChEBI" id="CHEBI:61387"/>
        <dbReference type="EC" id="2.7.8.13"/>
    </reaction>
</comment>
<comment type="cofactor">
    <cofactor evidence="1">
        <name>Mg(2+)</name>
        <dbReference type="ChEBI" id="CHEBI:18420"/>
    </cofactor>
</comment>
<comment type="pathway">
    <text evidence="1">Cell wall biogenesis; peptidoglycan biosynthesis.</text>
</comment>
<comment type="subcellular location">
    <subcellularLocation>
        <location evidence="1">Cell inner membrane</location>
        <topology evidence="1">Multi-pass membrane protein</topology>
    </subcellularLocation>
</comment>
<comment type="similarity">
    <text evidence="1">Belongs to the glycosyltransferase 4 family. MraY subfamily.</text>
</comment>
<keyword id="KW-0131">Cell cycle</keyword>
<keyword id="KW-0132">Cell division</keyword>
<keyword id="KW-0997">Cell inner membrane</keyword>
<keyword id="KW-1003">Cell membrane</keyword>
<keyword id="KW-0133">Cell shape</keyword>
<keyword id="KW-0961">Cell wall biogenesis/degradation</keyword>
<keyword id="KW-0460">Magnesium</keyword>
<keyword id="KW-0472">Membrane</keyword>
<keyword id="KW-0479">Metal-binding</keyword>
<keyword id="KW-0573">Peptidoglycan synthesis</keyword>
<keyword id="KW-0808">Transferase</keyword>
<keyword id="KW-0812">Transmembrane</keyword>
<keyword id="KW-1133">Transmembrane helix</keyword>
<gene>
    <name evidence="1" type="primary">mraY</name>
    <name type="ordered locus">P9515_19011</name>
</gene>
<reference key="1">
    <citation type="journal article" date="2007" name="PLoS Genet.">
        <title>Patterns and implications of gene gain and loss in the evolution of Prochlorococcus.</title>
        <authorList>
            <person name="Kettler G.C."/>
            <person name="Martiny A.C."/>
            <person name="Huang K."/>
            <person name="Zucker J."/>
            <person name="Coleman M.L."/>
            <person name="Rodrigue S."/>
            <person name="Chen F."/>
            <person name="Lapidus A."/>
            <person name="Ferriera S."/>
            <person name="Johnson J."/>
            <person name="Steglich C."/>
            <person name="Church G.M."/>
            <person name="Richardson P."/>
            <person name="Chisholm S.W."/>
        </authorList>
    </citation>
    <scope>NUCLEOTIDE SEQUENCE [LARGE SCALE GENOMIC DNA]</scope>
    <source>
        <strain>MIT 9515</strain>
    </source>
</reference>
<feature type="chain" id="PRO_0000332543" description="Phospho-N-acetylmuramoyl-pentapeptide-transferase">
    <location>
        <begin position="1"/>
        <end position="363"/>
    </location>
</feature>
<feature type="transmembrane region" description="Helical" evidence="1">
    <location>
        <begin position="15"/>
        <end position="33"/>
    </location>
</feature>
<feature type="transmembrane region" description="Helical" evidence="1">
    <location>
        <begin position="82"/>
        <end position="102"/>
    </location>
</feature>
<feature type="transmembrane region" description="Helical" evidence="1">
    <location>
        <begin position="106"/>
        <end position="126"/>
    </location>
</feature>
<feature type="transmembrane region" description="Helical" evidence="1">
    <location>
        <begin position="147"/>
        <end position="167"/>
    </location>
</feature>
<feature type="transmembrane region" description="Helical" evidence="1">
    <location>
        <begin position="183"/>
        <end position="203"/>
    </location>
</feature>
<feature type="transmembrane region" description="Helical" evidence="1">
    <location>
        <begin position="207"/>
        <end position="227"/>
    </location>
</feature>
<feature type="transmembrane region" description="Helical" evidence="1">
    <location>
        <begin position="233"/>
        <end position="253"/>
    </location>
</feature>
<feature type="transmembrane region" description="Helical" evidence="1">
    <location>
        <begin position="260"/>
        <end position="280"/>
    </location>
</feature>
<feature type="transmembrane region" description="Helical" evidence="1">
    <location>
        <begin position="285"/>
        <end position="305"/>
    </location>
</feature>
<feature type="transmembrane region" description="Helical" evidence="1">
    <location>
        <begin position="341"/>
        <end position="361"/>
    </location>
</feature>
<protein>
    <recommendedName>
        <fullName evidence="1">Phospho-N-acetylmuramoyl-pentapeptide-transferase</fullName>
        <ecNumber evidence="1">2.7.8.13</ecNumber>
    </recommendedName>
    <alternativeName>
        <fullName evidence="1">UDP-MurNAc-pentapeptide phosphotransferase</fullName>
    </alternativeName>
</protein>